<evidence type="ECO:0000255" key="1">
    <source>
        <dbReference type="HAMAP-Rule" id="MF_00387"/>
    </source>
</evidence>
<evidence type="ECO:0000305" key="2"/>
<sequence>MLTDNRLGEATLSPSIHPTAIIHPQAQLHATVQVGAFSVIGEKVTIGANTVIGPHVVVEGPTEIGTGNRIFPGAVIGCEPQDLKYKGGESWVKIGNDNQIREYVTINRATEEGAVTRIGDRNLLMAYAHVAHNCVIENEVIIANSVALAGHIYIESQARISGVLGVHQFVHIGRLAMVGGMSRIERDVPPFTIVEGNPSRVRSLNLIGLQRSGMSAEDLSALKQAFRLIYRSDTPYQQALEELGRSAAHPYVQHFQCFLQKSSYDQGRRGPIPGKK</sequence>
<feature type="chain" id="PRO_0000188070" description="Acyl-[acyl-carrier-protein]--UDP-N-acetylglucosamine O-acyltransferase">
    <location>
        <begin position="1"/>
        <end position="276"/>
    </location>
</feature>
<reference key="1">
    <citation type="journal article" date="1995" name="DNA Res.">
        <title>Sequence analysis of the genome of the unicellular cyanobacterium Synechocystis sp. strain PCC6803. I. Sequence features in the 1 Mb region from map positions 64% to 92% of the genome.</title>
        <authorList>
            <person name="Kaneko T."/>
            <person name="Tanaka A."/>
            <person name="Sato S."/>
            <person name="Kotani H."/>
            <person name="Sazuka T."/>
            <person name="Miyajima N."/>
            <person name="Sugiura M."/>
            <person name="Tabata S."/>
        </authorList>
    </citation>
    <scope>NUCLEOTIDE SEQUENCE [LARGE SCALE GENOMIC DNA]</scope>
    <source>
        <strain>ATCC 27184 / PCC 6803 / N-1</strain>
    </source>
</reference>
<reference key="2">
    <citation type="journal article" date="1996" name="DNA Res.">
        <title>Sequence analysis of the genome of the unicellular cyanobacterium Synechocystis sp. strain PCC6803. II. Sequence determination of the entire genome and assignment of potential protein-coding regions.</title>
        <authorList>
            <person name="Kaneko T."/>
            <person name="Sato S."/>
            <person name="Kotani H."/>
            <person name="Tanaka A."/>
            <person name="Asamizu E."/>
            <person name="Nakamura Y."/>
            <person name="Miyajima N."/>
            <person name="Hirosawa M."/>
            <person name="Sugiura M."/>
            <person name="Sasamoto S."/>
            <person name="Kimura T."/>
            <person name="Hosouchi T."/>
            <person name="Matsuno A."/>
            <person name="Muraki A."/>
            <person name="Nakazaki N."/>
            <person name="Naruo K."/>
            <person name="Okumura S."/>
            <person name="Shimpo S."/>
            <person name="Takeuchi C."/>
            <person name="Wada T."/>
            <person name="Watanabe A."/>
            <person name="Yamada M."/>
            <person name="Yasuda M."/>
            <person name="Tabata S."/>
        </authorList>
    </citation>
    <scope>NUCLEOTIDE SEQUENCE [LARGE SCALE GENOMIC DNA]</scope>
    <source>
        <strain>ATCC 27184 / PCC 6803 / Kazusa</strain>
    </source>
</reference>
<protein>
    <recommendedName>
        <fullName evidence="1">Acyl-[acyl-carrier-protein]--UDP-N-acetylglucosamine O-acyltransferase</fullName>
        <shortName evidence="1">UDP-N-acetylglucosamine acyltransferase</shortName>
        <ecNumber evidence="1">2.3.1.129</ecNumber>
    </recommendedName>
</protein>
<accession>Q55746</accession>
<dbReference type="EC" id="2.3.1.129" evidence="1"/>
<dbReference type="EMBL" id="BA000022">
    <property type="protein sequence ID" value="BAA10391.1"/>
    <property type="status" value="ALT_INIT"/>
    <property type="molecule type" value="Genomic_DNA"/>
</dbReference>
<dbReference type="PIR" id="S76545">
    <property type="entry name" value="S76545"/>
</dbReference>
<dbReference type="SMR" id="Q55746"/>
<dbReference type="IntAct" id="Q55746">
    <property type="interactions" value="1"/>
</dbReference>
<dbReference type="STRING" id="1148.gene:10499892"/>
<dbReference type="PaxDb" id="1148-1001657"/>
<dbReference type="EnsemblBacteria" id="BAA10391">
    <property type="protein sequence ID" value="BAA10391"/>
    <property type="gene ID" value="BAA10391"/>
</dbReference>
<dbReference type="KEGG" id="syn:sll0379"/>
<dbReference type="eggNOG" id="COG1043">
    <property type="taxonomic scope" value="Bacteria"/>
</dbReference>
<dbReference type="InParanoid" id="Q55746"/>
<dbReference type="PhylomeDB" id="Q55746"/>
<dbReference type="UniPathway" id="UPA00359">
    <property type="reaction ID" value="UER00477"/>
</dbReference>
<dbReference type="Proteomes" id="UP000001425">
    <property type="component" value="Chromosome"/>
</dbReference>
<dbReference type="GO" id="GO:0031470">
    <property type="term" value="C:carboxysome"/>
    <property type="evidence" value="ECO:0007669"/>
    <property type="project" value="UniProtKB-ARBA"/>
</dbReference>
<dbReference type="GO" id="GO:0005737">
    <property type="term" value="C:cytoplasm"/>
    <property type="evidence" value="ECO:0007669"/>
    <property type="project" value="UniProtKB-SubCell"/>
</dbReference>
<dbReference type="GO" id="GO:0016020">
    <property type="term" value="C:membrane"/>
    <property type="evidence" value="ECO:0007669"/>
    <property type="project" value="GOC"/>
</dbReference>
<dbReference type="GO" id="GO:0008780">
    <property type="term" value="F:acyl-[acyl-carrier-protein]-UDP-N-acetylglucosamine O-acyltransferase activity"/>
    <property type="evidence" value="ECO:0007669"/>
    <property type="project" value="UniProtKB-UniRule"/>
</dbReference>
<dbReference type="GO" id="GO:0043886">
    <property type="term" value="F:structural constituent of carboxysome shell"/>
    <property type="evidence" value="ECO:0007669"/>
    <property type="project" value="UniProtKB-ARBA"/>
</dbReference>
<dbReference type="GO" id="GO:0009245">
    <property type="term" value="P:lipid A biosynthetic process"/>
    <property type="evidence" value="ECO:0007669"/>
    <property type="project" value="UniProtKB-UniRule"/>
</dbReference>
<dbReference type="CDD" id="cd03351">
    <property type="entry name" value="LbH_UDP-GlcNAc_AT"/>
    <property type="match status" value="1"/>
</dbReference>
<dbReference type="Gene3D" id="2.160.10.10">
    <property type="entry name" value="Hexapeptide repeat proteins"/>
    <property type="match status" value="1"/>
</dbReference>
<dbReference type="Gene3D" id="1.20.1180.10">
    <property type="entry name" value="Udp N-acetylglucosamine O-acyltransferase, C-terminal domain"/>
    <property type="match status" value="1"/>
</dbReference>
<dbReference type="HAMAP" id="MF_00387">
    <property type="entry name" value="LpxA"/>
    <property type="match status" value="1"/>
</dbReference>
<dbReference type="InterPro" id="IPR029098">
    <property type="entry name" value="Acetyltransf_C"/>
</dbReference>
<dbReference type="InterPro" id="IPR037157">
    <property type="entry name" value="Acetyltransf_C_sf"/>
</dbReference>
<dbReference type="InterPro" id="IPR001451">
    <property type="entry name" value="Hexapep"/>
</dbReference>
<dbReference type="InterPro" id="IPR010137">
    <property type="entry name" value="Lipid_A_LpxA"/>
</dbReference>
<dbReference type="InterPro" id="IPR011004">
    <property type="entry name" value="Trimer_LpxA-like_sf"/>
</dbReference>
<dbReference type="NCBIfam" id="TIGR01852">
    <property type="entry name" value="lipid_A_lpxA"/>
    <property type="match status" value="1"/>
</dbReference>
<dbReference type="NCBIfam" id="NF003657">
    <property type="entry name" value="PRK05289.1"/>
    <property type="match status" value="1"/>
</dbReference>
<dbReference type="PANTHER" id="PTHR43480">
    <property type="entry name" value="ACYL-[ACYL-CARRIER-PROTEIN]--UDP-N-ACETYLGLUCOSAMINE O-ACYLTRANSFERASE"/>
    <property type="match status" value="1"/>
</dbReference>
<dbReference type="PANTHER" id="PTHR43480:SF1">
    <property type="entry name" value="ACYL-[ACYL-CARRIER-PROTEIN]--UDP-N-ACETYLGLUCOSAMINE O-ACYLTRANSFERASE, MITOCHONDRIAL-RELATED"/>
    <property type="match status" value="1"/>
</dbReference>
<dbReference type="Pfam" id="PF13720">
    <property type="entry name" value="Acetyltransf_11"/>
    <property type="match status" value="1"/>
</dbReference>
<dbReference type="Pfam" id="PF00132">
    <property type="entry name" value="Hexapep"/>
    <property type="match status" value="2"/>
</dbReference>
<dbReference type="PIRSF" id="PIRSF000456">
    <property type="entry name" value="UDP-GlcNAc_acltr"/>
    <property type="match status" value="1"/>
</dbReference>
<dbReference type="SUPFAM" id="SSF51161">
    <property type="entry name" value="Trimeric LpxA-like enzymes"/>
    <property type="match status" value="1"/>
</dbReference>
<proteinExistence type="inferred from homology"/>
<organism>
    <name type="scientific">Synechocystis sp. (strain ATCC 27184 / PCC 6803 / Kazusa)</name>
    <dbReference type="NCBI Taxonomy" id="1111708"/>
    <lineage>
        <taxon>Bacteria</taxon>
        <taxon>Bacillati</taxon>
        <taxon>Cyanobacteriota</taxon>
        <taxon>Cyanophyceae</taxon>
        <taxon>Synechococcales</taxon>
        <taxon>Merismopediaceae</taxon>
        <taxon>Synechocystis</taxon>
    </lineage>
</organism>
<gene>
    <name evidence="1" type="primary">lpxA</name>
    <name type="ordered locus">sll0379</name>
</gene>
<name>LPXA_SYNY3</name>
<keyword id="KW-0012">Acyltransferase</keyword>
<keyword id="KW-0963">Cytoplasm</keyword>
<keyword id="KW-0441">Lipid A biosynthesis</keyword>
<keyword id="KW-0444">Lipid biosynthesis</keyword>
<keyword id="KW-0443">Lipid metabolism</keyword>
<keyword id="KW-1185">Reference proteome</keyword>
<keyword id="KW-0677">Repeat</keyword>
<keyword id="KW-0808">Transferase</keyword>
<comment type="function">
    <text evidence="1">Involved in the biosynthesis of lipid A, a phosphorylated glycolipid that anchors the lipopolysaccharide to the outer membrane of the cell.</text>
</comment>
<comment type="catalytic activity">
    <reaction evidence="1">
        <text>a (3R)-hydroxyacyl-[ACP] + UDP-N-acetyl-alpha-D-glucosamine = a UDP-3-O-[(3R)-3-hydroxyacyl]-N-acetyl-alpha-D-glucosamine + holo-[ACP]</text>
        <dbReference type="Rhea" id="RHEA:67812"/>
        <dbReference type="Rhea" id="RHEA-COMP:9685"/>
        <dbReference type="Rhea" id="RHEA-COMP:9945"/>
        <dbReference type="ChEBI" id="CHEBI:57705"/>
        <dbReference type="ChEBI" id="CHEBI:64479"/>
        <dbReference type="ChEBI" id="CHEBI:78827"/>
        <dbReference type="ChEBI" id="CHEBI:173225"/>
        <dbReference type="EC" id="2.3.1.129"/>
    </reaction>
</comment>
<comment type="pathway">
    <text evidence="1">Glycolipid biosynthesis; lipid IV(A) biosynthesis; lipid IV(A) from (3R)-3-hydroxytetradecanoyl-[acyl-carrier-protein] and UDP-N-acetyl-alpha-D-glucosamine: step 1/6.</text>
</comment>
<comment type="subunit">
    <text evidence="1">Homotrimer.</text>
</comment>
<comment type="subcellular location">
    <subcellularLocation>
        <location evidence="1">Cytoplasm</location>
    </subcellularLocation>
</comment>
<comment type="similarity">
    <text evidence="1">Belongs to the transferase hexapeptide repeat family. LpxA subfamily.</text>
</comment>
<comment type="sequence caution" evidence="2">
    <conflict type="erroneous initiation">
        <sequence resource="EMBL-CDS" id="BAA10391"/>
    </conflict>
</comment>